<gene>
    <name type="primary">EFR3</name>
    <name type="ordered locus">YMR212C</name>
    <name type="ORF">YM8261.06C</name>
</gene>
<reference key="1">
    <citation type="journal article" date="1997" name="Nature">
        <title>The nucleotide sequence of Saccharomyces cerevisiae chromosome XIII.</title>
        <authorList>
            <person name="Bowman S."/>
            <person name="Churcher C.M."/>
            <person name="Badcock K."/>
            <person name="Brown D."/>
            <person name="Chillingworth T."/>
            <person name="Connor R."/>
            <person name="Dedman K."/>
            <person name="Devlin K."/>
            <person name="Gentles S."/>
            <person name="Hamlin N."/>
            <person name="Hunt S."/>
            <person name="Jagels K."/>
            <person name="Lye G."/>
            <person name="Moule S."/>
            <person name="Odell C."/>
            <person name="Pearson D."/>
            <person name="Rajandream M.A."/>
            <person name="Rice P."/>
            <person name="Skelton J."/>
            <person name="Walsh S.V."/>
            <person name="Whitehead S."/>
            <person name="Barrell B.G."/>
        </authorList>
    </citation>
    <scope>NUCLEOTIDE SEQUENCE [LARGE SCALE GENOMIC DNA]</scope>
    <source>
        <strain>ATCC 204508 / S288c</strain>
    </source>
</reference>
<reference key="2">
    <citation type="journal article" date="2014" name="G3 (Bethesda)">
        <title>The reference genome sequence of Saccharomyces cerevisiae: Then and now.</title>
        <authorList>
            <person name="Engel S.R."/>
            <person name="Dietrich F.S."/>
            <person name="Fisk D.G."/>
            <person name="Binkley G."/>
            <person name="Balakrishnan R."/>
            <person name="Costanzo M.C."/>
            <person name="Dwight S.S."/>
            <person name="Hitz B.C."/>
            <person name="Karra K."/>
            <person name="Nash R.S."/>
            <person name="Weng S."/>
            <person name="Wong E.D."/>
            <person name="Lloyd P."/>
            <person name="Skrzypek M.S."/>
            <person name="Miyasato S.R."/>
            <person name="Simison M."/>
            <person name="Cherry J.M."/>
        </authorList>
    </citation>
    <scope>GENOME REANNOTATION</scope>
    <source>
        <strain>ATCC 204508 / S288c</strain>
    </source>
</reference>
<reference key="3">
    <citation type="journal article" date="2003" name="Nature">
        <title>Global analysis of protein expression in yeast.</title>
        <authorList>
            <person name="Ghaemmaghami S."/>
            <person name="Huh W.-K."/>
            <person name="Bower K."/>
            <person name="Howson R.W."/>
            <person name="Belle A."/>
            <person name="Dephoure N."/>
            <person name="O'Shea E.K."/>
            <person name="Weissman J.S."/>
        </authorList>
    </citation>
    <scope>LEVEL OF PROTEIN EXPRESSION [LARGE SCALE ANALYSIS]</scope>
</reference>
<reference key="4">
    <citation type="journal article" date="2005" name="Mol. Cell. Proteomics">
        <title>Quantitative phosphoproteomics applied to the yeast pheromone signaling pathway.</title>
        <authorList>
            <person name="Gruhler A."/>
            <person name="Olsen J.V."/>
            <person name="Mohammed S."/>
            <person name="Mortensen P."/>
            <person name="Faergeman N.J."/>
            <person name="Mann M."/>
            <person name="Jensen O.N."/>
        </authorList>
    </citation>
    <scope>IDENTIFICATION BY MASS SPECTROMETRY [LARGE SCALE ANALYSIS]</scope>
    <source>
        <strain>YAL6B</strain>
    </source>
</reference>
<reference key="5">
    <citation type="journal article" date="2007" name="J. Proteome Res.">
        <title>Large-scale phosphorylation analysis of alpha-factor-arrested Saccharomyces cerevisiae.</title>
        <authorList>
            <person name="Li X."/>
            <person name="Gerber S.A."/>
            <person name="Rudner A.D."/>
            <person name="Beausoleil S.A."/>
            <person name="Haas W."/>
            <person name="Villen J."/>
            <person name="Elias J.E."/>
            <person name="Gygi S.P."/>
        </authorList>
    </citation>
    <scope>PHOSPHORYLATION [LARGE SCALE ANALYSIS] AT SER-643; THR-687; THR-690; SER-735 AND SER-771</scope>
    <scope>IDENTIFICATION BY MASS SPECTROMETRY [LARGE SCALE ANALYSIS]</scope>
    <source>
        <strain>ADR376</strain>
    </source>
</reference>
<reference key="6">
    <citation type="journal article" date="2007" name="Mol. Cell. Proteomics">
        <title>Profiling phosphoproteins of yeast mitochondria reveals a role of phosphorylation in assembly of the ATP synthase.</title>
        <authorList>
            <person name="Reinders J."/>
            <person name="Wagner K."/>
            <person name="Zahedi R.P."/>
            <person name="Stojanovski D."/>
            <person name="Eyrich B."/>
            <person name="van der Laan M."/>
            <person name="Rehling P."/>
            <person name="Sickmann A."/>
            <person name="Pfanner N."/>
            <person name="Meisinger C."/>
        </authorList>
    </citation>
    <scope>IDENTIFICATION BY MASS SPECTROMETRY [LARGE SCALE ANALYSIS]</scope>
    <source>
        <strain>ATCC 76625 / YPH499</strain>
    </source>
</reference>
<reference key="7">
    <citation type="journal article" date="2007" name="Proc. Natl. Acad. Sci. U.S.A.">
        <title>Analysis of phosphorylation sites on proteins from Saccharomyces cerevisiae by electron transfer dissociation (ETD) mass spectrometry.</title>
        <authorList>
            <person name="Chi A."/>
            <person name="Huttenhower C."/>
            <person name="Geer L.Y."/>
            <person name="Coon J.J."/>
            <person name="Syka J.E.P."/>
            <person name="Bai D.L."/>
            <person name="Shabanowitz J."/>
            <person name="Burke D.J."/>
            <person name="Troyanskaya O.G."/>
            <person name="Hunt D.F."/>
        </authorList>
    </citation>
    <scope>PHOSPHORYLATION [LARGE SCALE ANALYSIS] AT SER-227; THR-231 AND SER-675</scope>
    <scope>IDENTIFICATION BY MASS SPECTROMETRY [LARGE SCALE ANALYSIS]</scope>
</reference>
<reference key="8">
    <citation type="journal article" date="2008" name="Mol. Cell. Proteomics">
        <title>A multidimensional chromatography technology for in-depth phosphoproteome analysis.</title>
        <authorList>
            <person name="Albuquerque C.P."/>
            <person name="Smolka M.B."/>
            <person name="Payne S.H."/>
            <person name="Bafna V."/>
            <person name="Eng J."/>
            <person name="Zhou H."/>
        </authorList>
    </citation>
    <scope>PHOSPHORYLATION [LARGE SCALE ANALYSIS] AT SER-564 AND SER-771</scope>
    <scope>IDENTIFICATION BY MASS SPECTROMETRY [LARGE SCALE ANALYSIS]</scope>
</reference>
<reference key="9">
    <citation type="journal article" date="2009" name="Science">
        <title>Global analysis of Cdk1 substrate phosphorylation sites provides insights into evolution.</title>
        <authorList>
            <person name="Holt L.J."/>
            <person name="Tuch B.B."/>
            <person name="Villen J."/>
            <person name="Johnson A.D."/>
            <person name="Gygi S.P."/>
            <person name="Morgan D.O."/>
        </authorList>
    </citation>
    <scope>PHOSPHORYLATION [LARGE SCALE ANALYSIS] AT SER-625; SER-632; THR-690; SER-771 AND SER-774</scope>
    <scope>IDENTIFICATION BY MASS SPECTROMETRY [LARGE SCALE ANALYSIS]</scope>
</reference>
<evidence type="ECO:0000269" key="1">
    <source>
    </source>
</evidence>
<evidence type="ECO:0000305" key="2"/>
<evidence type="ECO:0007744" key="3">
    <source>
    </source>
</evidence>
<evidence type="ECO:0007744" key="4">
    <source>
    </source>
</evidence>
<evidence type="ECO:0007744" key="5">
    <source>
    </source>
</evidence>
<evidence type="ECO:0007744" key="6">
    <source>
    </source>
</evidence>
<evidence type="ECO:0007829" key="7">
    <source>
        <dbReference type="PDB" id="4N5A"/>
    </source>
</evidence>
<sequence>MQLSMRMMFTPKHQKLVNQCYPTGRTTDKKPKSSETSYLLYYVNSRRSKLEKVSTYLIKRSTSDLNHRRIGNIAVTLDLMNKIVLHCKENLNVFVKDFLYIMNKVLSNNNFNNDVSVVELIELAFSSICQNLDDVLCNGDMEFVQLYQNFVDLFFKIVTERIHNDDMLLKCCIDISNTNSVSSNPQLNHFVSKSVAYTISKFQERNPKFKTLSLEAALESNLGKRLSRTQTRTIGLDKAAEDNHDLSVKALQSYFNTTETDKLNLSIRTLLRCLQSTPNKELLEFVCNGIPVQLRYIVILLLVRQLSDKDKNVNPIVSLKLMSSLLVSDVSIVGLSVLDIMRKLLNFQLKNATNKEVVAQSCITMTDLNHKTYYAEQTSDMLYELLLKLKSDTVKDVEKNAVVEDIDFLVEHITQPSISLELFIDLAHYMKNHIICLFNIVETEVPSSILFSKLYSLLRELDSHGVQKEMMEEIFDKYGKMALLSGLNYFLENVSEPEYTYYSYHLQAANFLKLNDYKSQTEYKMQTRTLFTKEDLLSYYSDTGSNKYSKKGAQILLSRDNQISTSDLLSDSQVRTTPLEYKNVPNAIFSNGKAVYDNNDFAAKQNKFDNSIDDNIEEANDTVISDANAKGSIYRFVAEDARSWKTMRATAPKVSDLKKTMNEKNIPNNMKRDGSFRGSQSVKSRVTNITFLLNELKTFSDDANKIKDPDEENIVGLDKIDVARSNSLRLAPISSLSDRSSIGNRKSFLQKTATGENQNDDFKDANEDLHSLSSRGKIFSST</sequence>
<comment type="interaction">
    <interactant intactId="EBI-27465">
        <id>Q03653</id>
    </interactant>
    <interactant intactId="EBI-18454">
        <id>P37297</id>
        <label>STT4</label>
    </interactant>
    <organismsDiffer>false</organismsDiffer>
    <experiments>2</experiments>
</comment>
<comment type="miscellaneous">
    <text evidence="1">Present with 1670 molecules/cell in log phase SD medium.</text>
</comment>
<comment type="similarity">
    <text evidence="2">Belongs to the EFR3 family.</text>
</comment>
<organism>
    <name type="scientific">Saccharomyces cerevisiae (strain ATCC 204508 / S288c)</name>
    <name type="common">Baker's yeast</name>
    <dbReference type="NCBI Taxonomy" id="559292"/>
    <lineage>
        <taxon>Eukaryota</taxon>
        <taxon>Fungi</taxon>
        <taxon>Dikarya</taxon>
        <taxon>Ascomycota</taxon>
        <taxon>Saccharomycotina</taxon>
        <taxon>Saccharomycetes</taxon>
        <taxon>Saccharomycetales</taxon>
        <taxon>Saccharomycetaceae</taxon>
        <taxon>Saccharomyces</taxon>
    </lineage>
</organism>
<accession>Q03653</accession>
<accession>D6W037</accession>
<dbReference type="EMBL" id="Z49809">
    <property type="protein sequence ID" value="CAA89927.1"/>
    <property type="molecule type" value="Genomic_DNA"/>
</dbReference>
<dbReference type="EMBL" id="BK006946">
    <property type="protein sequence ID" value="DAA10111.1"/>
    <property type="molecule type" value="Genomic_DNA"/>
</dbReference>
<dbReference type="PIR" id="S55094">
    <property type="entry name" value="S55094"/>
</dbReference>
<dbReference type="RefSeq" id="NP_013939.1">
    <property type="nucleotide sequence ID" value="NM_001182719.1"/>
</dbReference>
<dbReference type="PDB" id="4N5A">
    <property type="method" value="X-ray"/>
    <property type="resolution" value="3.20 A"/>
    <property type="chains" value="A=8-562"/>
</dbReference>
<dbReference type="PDBsum" id="4N5A"/>
<dbReference type="SMR" id="Q03653"/>
<dbReference type="BioGRID" id="35390">
    <property type="interactions" value="45"/>
</dbReference>
<dbReference type="DIP" id="DIP-5686N"/>
<dbReference type="FunCoup" id="Q03653">
    <property type="interactions" value="87"/>
</dbReference>
<dbReference type="IntAct" id="Q03653">
    <property type="interactions" value="8"/>
</dbReference>
<dbReference type="MINT" id="Q03653"/>
<dbReference type="STRING" id="4932.YMR212C"/>
<dbReference type="iPTMnet" id="Q03653"/>
<dbReference type="PaxDb" id="4932-YMR212C"/>
<dbReference type="PeptideAtlas" id="Q03653"/>
<dbReference type="EnsemblFungi" id="YMR212C_mRNA">
    <property type="protein sequence ID" value="YMR212C"/>
    <property type="gene ID" value="YMR212C"/>
</dbReference>
<dbReference type="GeneID" id="855252"/>
<dbReference type="KEGG" id="sce:YMR212C"/>
<dbReference type="AGR" id="SGD:S000004825"/>
<dbReference type="SGD" id="S000004825">
    <property type="gene designation" value="EFR3"/>
</dbReference>
<dbReference type="VEuPathDB" id="FungiDB:YMR212C"/>
<dbReference type="eggNOG" id="KOG1877">
    <property type="taxonomic scope" value="Eukaryota"/>
</dbReference>
<dbReference type="GeneTree" id="ENSGT00390000002143"/>
<dbReference type="HOGENOM" id="CLU_371806_0_0_1"/>
<dbReference type="InParanoid" id="Q03653"/>
<dbReference type="OMA" id="LYYVNSR"/>
<dbReference type="OrthoDB" id="19232at2759"/>
<dbReference type="BioCyc" id="YEAST:G3O-32895-MONOMER"/>
<dbReference type="BioGRID-ORCS" id="855252">
    <property type="hits" value="4 hits in 10 CRISPR screens"/>
</dbReference>
<dbReference type="EvolutionaryTrace" id="Q03653"/>
<dbReference type="PRO" id="PR:Q03653"/>
<dbReference type="Proteomes" id="UP000002311">
    <property type="component" value="Chromosome XIII"/>
</dbReference>
<dbReference type="RNAct" id="Q03653">
    <property type="molecule type" value="protein"/>
</dbReference>
<dbReference type="GO" id="GO:0071944">
    <property type="term" value="C:cell periphery"/>
    <property type="evidence" value="ECO:0007005"/>
    <property type="project" value="SGD"/>
</dbReference>
<dbReference type="GO" id="GO:0005739">
    <property type="term" value="C:mitochondrion"/>
    <property type="evidence" value="ECO:0007005"/>
    <property type="project" value="SGD"/>
</dbReference>
<dbReference type="GO" id="GO:0005886">
    <property type="term" value="C:plasma membrane"/>
    <property type="evidence" value="ECO:0000314"/>
    <property type="project" value="SGD"/>
</dbReference>
<dbReference type="GO" id="GO:0072659">
    <property type="term" value="P:protein localization to plasma membrane"/>
    <property type="evidence" value="ECO:0000315"/>
    <property type="project" value="SGD"/>
</dbReference>
<dbReference type="DisProt" id="DP02751"/>
<dbReference type="InterPro" id="IPR039786">
    <property type="entry name" value="EFR3"/>
</dbReference>
<dbReference type="InterPro" id="IPR049150">
    <property type="entry name" value="EFR3_HEAT-like_rpt"/>
</dbReference>
<dbReference type="PANTHER" id="PTHR47766">
    <property type="entry name" value="PROTEIN EFR3"/>
    <property type="match status" value="1"/>
</dbReference>
<dbReference type="PANTHER" id="PTHR47766:SF1">
    <property type="entry name" value="PROTEIN EFR3"/>
    <property type="match status" value="1"/>
</dbReference>
<dbReference type="Pfam" id="PF21072">
    <property type="entry name" value="EFR3"/>
    <property type="match status" value="1"/>
</dbReference>
<feature type="chain" id="PRO_0000203332" description="Protein EFR3">
    <location>
        <begin position="1"/>
        <end position="782"/>
    </location>
</feature>
<feature type="modified residue" description="Phosphoserine" evidence="3">
    <location>
        <position position="227"/>
    </location>
</feature>
<feature type="modified residue" description="Phosphothreonine" evidence="3">
    <location>
        <position position="231"/>
    </location>
</feature>
<feature type="modified residue" description="Phosphoserine" evidence="5">
    <location>
        <position position="564"/>
    </location>
</feature>
<feature type="modified residue" description="Phosphoserine" evidence="6">
    <location>
        <position position="625"/>
    </location>
</feature>
<feature type="modified residue" description="Phosphoserine" evidence="6">
    <location>
        <position position="632"/>
    </location>
</feature>
<feature type="modified residue" description="Phosphoserine" evidence="4">
    <location>
        <position position="643"/>
    </location>
</feature>
<feature type="modified residue" description="Phosphoserine" evidence="3">
    <location>
        <position position="675"/>
    </location>
</feature>
<feature type="modified residue" description="Phosphothreonine" evidence="4">
    <location>
        <position position="687"/>
    </location>
</feature>
<feature type="modified residue" description="Phosphothreonine" evidence="4 6">
    <location>
        <position position="690"/>
    </location>
</feature>
<feature type="modified residue" description="Phosphoserine" evidence="4">
    <location>
        <position position="735"/>
    </location>
</feature>
<feature type="modified residue" description="Phosphoserine" evidence="4 5 6">
    <location>
        <position position="771"/>
    </location>
</feature>
<feature type="modified residue" description="Phosphoserine" evidence="6">
    <location>
        <position position="774"/>
    </location>
</feature>
<feature type="helix" evidence="7">
    <location>
        <begin position="12"/>
        <end position="19"/>
    </location>
</feature>
<feature type="helix" evidence="7">
    <location>
        <begin position="33"/>
        <end position="45"/>
    </location>
</feature>
<feature type="helix" evidence="7">
    <location>
        <begin position="47"/>
        <end position="66"/>
    </location>
</feature>
<feature type="helix" evidence="7">
    <location>
        <begin position="70"/>
        <end position="86"/>
    </location>
</feature>
<feature type="helix" evidence="7">
    <location>
        <begin position="88"/>
        <end position="93"/>
    </location>
</feature>
<feature type="helix" evidence="7">
    <location>
        <begin position="95"/>
        <end position="106"/>
    </location>
</feature>
<feature type="turn" evidence="7">
    <location>
        <begin position="109"/>
        <end position="111"/>
    </location>
</feature>
<feature type="helix" evidence="7">
    <location>
        <begin position="115"/>
        <end position="129"/>
    </location>
</feature>
<feature type="helix" evidence="7">
    <location>
        <begin position="134"/>
        <end position="138"/>
    </location>
</feature>
<feature type="helix" evidence="7">
    <location>
        <begin position="141"/>
        <end position="158"/>
    </location>
</feature>
<feature type="turn" evidence="7">
    <location>
        <begin position="159"/>
        <end position="162"/>
    </location>
</feature>
<feature type="helix" evidence="7">
    <location>
        <begin position="165"/>
        <end position="177"/>
    </location>
</feature>
<feature type="turn" evidence="7">
    <location>
        <begin position="185"/>
        <end position="187"/>
    </location>
</feature>
<feature type="helix" evidence="7">
    <location>
        <begin position="188"/>
        <end position="200"/>
    </location>
</feature>
<feature type="turn" evidence="7">
    <location>
        <begin position="201"/>
        <end position="204"/>
    </location>
</feature>
<feature type="helix" evidence="7">
    <location>
        <begin position="207"/>
        <end position="210"/>
    </location>
</feature>
<feature type="strand" evidence="7">
    <location>
        <begin position="236"/>
        <end position="239"/>
    </location>
</feature>
<feature type="helix" evidence="7">
    <location>
        <begin position="246"/>
        <end position="255"/>
    </location>
</feature>
<feature type="helix" evidence="7">
    <location>
        <begin position="260"/>
        <end position="276"/>
    </location>
</feature>
<feature type="helix" evidence="7">
    <location>
        <begin position="280"/>
        <end position="289"/>
    </location>
</feature>
<feature type="helix" evidence="7">
    <location>
        <begin position="292"/>
        <end position="295"/>
    </location>
</feature>
<feature type="helix" evidence="7">
    <location>
        <begin position="296"/>
        <end position="307"/>
    </location>
</feature>
<feature type="strand" evidence="7">
    <location>
        <begin position="311"/>
        <end position="313"/>
    </location>
</feature>
<feature type="helix" evidence="7">
    <location>
        <begin position="315"/>
        <end position="327"/>
    </location>
</feature>
<feature type="helix" evidence="7">
    <location>
        <begin position="337"/>
        <end position="350"/>
    </location>
</feature>
<feature type="helix" evidence="7">
    <location>
        <begin position="355"/>
        <end position="369"/>
    </location>
</feature>
<feature type="helix" evidence="7">
    <location>
        <begin position="377"/>
        <end position="390"/>
    </location>
</feature>
<feature type="helix" evidence="7">
    <location>
        <begin position="396"/>
        <end position="412"/>
    </location>
</feature>
<feature type="helix" evidence="7">
    <location>
        <begin position="420"/>
        <end position="429"/>
    </location>
</feature>
<feature type="helix" evidence="7">
    <location>
        <begin position="431"/>
        <end position="433"/>
    </location>
</feature>
<feature type="helix" evidence="7">
    <location>
        <begin position="434"/>
        <end position="438"/>
    </location>
</feature>
<feature type="helix" evidence="7">
    <location>
        <begin position="448"/>
        <end position="459"/>
    </location>
</feature>
<feature type="helix" evidence="7">
    <location>
        <begin position="464"/>
        <end position="477"/>
    </location>
</feature>
<feature type="helix" evidence="7">
    <location>
        <begin position="479"/>
        <end position="493"/>
    </location>
</feature>
<feature type="helix" evidence="7">
    <location>
        <begin position="499"/>
        <end position="512"/>
    </location>
</feature>
<feature type="helix" evidence="7">
    <location>
        <begin position="515"/>
        <end position="526"/>
    </location>
</feature>
<feature type="helix" evidence="7">
    <location>
        <begin position="533"/>
        <end position="537"/>
    </location>
</feature>
<feature type="turn" evidence="7">
    <location>
        <begin position="543"/>
        <end position="545"/>
    </location>
</feature>
<feature type="helix" evidence="7">
    <location>
        <begin position="549"/>
        <end position="557"/>
    </location>
</feature>
<protein>
    <recommendedName>
        <fullName>Protein EFR3</fullName>
    </recommendedName>
</protein>
<keyword id="KW-0002">3D-structure</keyword>
<keyword id="KW-0597">Phosphoprotein</keyword>
<keyword id="KW-1185">Reference proteome</keyword>
<proteinExistence type="evidence at protein level"/>
<name>EFR3_YEAST</name>